<gene>
    <name type="primary">ITM2B</name>
</gene>
<protein>
    <recommendedName>
        <fullName>Integral membrane protein 2B</fullName>
    </recommendedName>
    <alternativeName>
        <fullName>Transmembrane protein E3-16</fullName>
    </alternativeName>
</protein>
<evidence type="ECO:0000250" key="1"/>
<evidence type="ECO:0000250" key="2">
    <source>
        <dbReference type="UniProtKB" id="Q9Y287"/>
    </source>
</evidence>
<evidence type="ECO:0000255" key="3"/>
<evidence type="ECO:0000255" key="4">
    <source>
        <dbReference type="PROSITE-ProRule" id="PRU00255"/>
    </source>
</evidence>
<evidence type="ECO:0000305" key="5"/>
<feature type="chain" id="PRO_0000154825" description="Integral membrane protein 2B">
    <location>
        <begin position="1"/>
        <end position="262"/>
    </location>
</feature>
<feature type="topological domain" description="Cytoplasmic" evidence="3">
    <location>
        <begin position="1"/>
        <end position="49"/>
    </location>
</feature>
<feature type="transmembrane region" description="Helical; Signal-anchor for type II membrane protein" evidence="3">
    <location>
        <begin position="50"/>
        <end position="70"/>
    </location>
</feature>
<feature type="topological domain" description="Lumenal" evidence="3">
    <location>
        <begin position="71"/>
        <end position="262"/>
    </location>
</feature>
<feature type="domain" description="BRICHOS" evidence="4">
    <location>
        <begin position="132"/>
        <end position="226"/>
    </location>
</feature>
<feature type="glycosylation site" description="N-linked (GlcNAc...) asparagine" evidence="3">
    <location>
        <position position="165"/>
    </location>
</feature>
<feature type="disulfide bond" description="Interchain" evidence="1">
    <location>
        <position position="84"/>
    </location>
</feature>
<feature type="disulfide bond" evidence="1">
    <location>
        <begin position="159"/>
        <end position="218"/>
    </location>
</feature>
<feature type="disulfide bond" evidence="1">
    <location>
        <begin position="243"/>
        <end position="260"/>
    </location>
</feature>
<reference key="1">
    <citation type="submission" date="1997-08" db="EMBL/GenBank/DDBJ databases">
        <title>A screen for inner ear-specific mRNAs.</title>
        <authorList>
            <person name="Heller S."/>
            <person name="Nguyen T.-P."/>
            <person name="Javed Z."/>
            <person name="Hudspeth A.J."/>
        </authorList>
    </citation>
    <scope>NUCLEOTIDE SEQUENCE [MRNA]</scope>
    <source>
        <tissue>Basilar papilla</tissue>
    </source>
</reference>
<proteinExistence type="evidence at transcript level"/>
<sequence length="262" mass="30010">MVKVSFNSALAHKEAANKEEENSQVLILPPDAKEPEDVVVPAGHKRAWCWCMCFGLAFMLAGVILGGAYLYKYFAFQQGGVYFCGIKYIEDGLSLPESGAQLKSARYHTIEQNIQILEEEDVEFISVPVPEFADSDPADIVHDFHRRLTAYLDLSLDKCYVIPLNTSVVMPPKNFLELLINIKAGTYLPQSYLIHEQMIVTDRIENVDQLGFFIYRLCRGKETYKLQRKEAMKGIQKREAVNCRKIRHFENRFAMETLICEQ</sequence>
<accession>O42204</accession>
<dbReference type="EMBL" id="AF017985">
    <property type="protein sequence ID" value="AAB70816.1"/>
    <property type="molecule type" value="mRNA"/>
</dbReference>
<dbReference type="SMR" id="O42204"/>
<dbReference type="FunCoup" id="O42204">
    <property type="interactions" value="648"/>
</dbReference>
<dbReference type="STRING" id="9031.ENSGALP00000029511"/>
<dbReference type="GlyCosmos" id="O42204">
    <property type="glycosylation" value="1 site, No reported glycans"/>
</dbReference>
<dbReference type="GlyGen" id="O42204">
    <property type="glycosylation" value="1 site"/>
</dbReference>
<dbReference type="PaxDb" id="9031-ENSGALP00000029511"/>
<dbReference type="VEuPathDB" id="HostDB:geneid_395969"/>
<dbReference type="eggNOG" id="KOG4681">
    <property type="taxonomic scope" value="Eukaryota"/>
</dbReference>
<dbReference type="InParanoid" id="O42204"/>
<dbReference type="OrthoDB" id="9982095at2759"/>
<dbReference type="PhylomeDB" id="O42204"/>
<dbReference type="Proteomes" id="UP000000539">
    <property type="component" value="Unassembled WGS sequence"/>
</dbReference>
<dbReference type="GO" id="GO:0010008">
    <property type="term" value="C:endosome membrane"/>
    <property type="evidence" value="ECO:0007669"/>
    <property type="project" value="UniProtKB-SubCell"/>
</dbReference>
<dbReference type="GO" id="GO:0005794">
    <property type="term" value="C:Golgi apparatus"/>
    <property type="evidence" value="ECO:0000318"/>
    <property type="project" value="GO_Central"/>
</dbReference>
<dbReference type="GO" id="GO:0000139">
    <property type="term" value="C:Golgi membrane"/>
    <property type="evidence" value="ECO:0007669"/>
    <property type="project" value="UniProtKB-SubCell"/>
</dbReference>
<dbReference type="GO" id="GO:0005886">
    <property type="term" value="C:plasma membrane"/>
    <property type="evidence" value="ECO:0000318"/>
    <property type="project" value="GO_Central"/>
</dbReference>
<dbReference type="GO" id="GO:0001540">
    <property type="term" value="F:amyloid-beta binding"/>
    <property type="evidence" value="ECO:0000318"/>
    <property type="project" value="GO_Central"/>
</dbReference>
<dbReference type="GO" id="GO:0042985">
    <property type="term" value="P:negative regulation of amyloid precursor protein biosynthetic process"/>
    <property type="evidence" value="ECO:0000318"/>
    <property type="project" value="GO_Central"/>
</dbReference>
<dbReference type="InterPro" id="IPR007084">
    <property type="entry name" value="BRICHOS_dom"/>
</dbReference>
<dbReference type="InterPro" id="IPR040145">
    <property type="entry name" value="ITM2"/>
</dbReference>
<dbReference type="PANTHER" id="PTHR10962:SF4">
    <property type="entry name" value="INTEGRAL MEMBRANE PROTEIN 2B"/>
    <property type="match status" value="1"/>
</dbReference>
<dbReference type="PANTHER" id="PTHR10962">
    <property type="entry name" value="INTEGRAL TRANSMEMBRANE PROTEIN 2"/>
    <property type="match status" value="1"/>
</dbReference>
<dbReference type="Pfam" id="PF04089">
    <property type="entry name" value="BRICHOS"/>
    <property type="match status" value="1"/>
</dbReference>
<dbReference type="SMART" id="SM01039">
    <property type="entry name" value="BRICHOS"/>
    <property type="match status" value="1"/>
</dbReference>
<dbReference type="PROSITE" id="PS50869">
    <property type="entry name" value="BRICHOS"/>
    <property type="match status" value="1"/>
</dbReference>
<name>ITM2B_CHICK</name>
<comment type="function">
    <text evidence="1">Plays a role in the induction of neurite outgrowth.</text>
</comment>
<comment type="subunit">
    <text evidence="1">Homodimer; disulfide-linked.</text>
</comment>
<comment type="subcellular location">
    <subcellularLocation>
        <location evidence="2">Golgi apparatus membrane</location>
        <topology evidence="2">Single-pass type II membrane protein</topology>
    </subcellularLocation>
    <subcellularLocation>
        <location evidence="2">Cell membrane</location>
        <topology evidence="2">Single-pass type II membrane protein</topology>
    </subcellularLocation>
    <subcellularLocation>
        <location evidence="2">Endosome membrane</location>
        <topology evidence="2">Single-pass type II membrane protein</topology>
    </subcellularLocation>
</comment>
<comment type="tissue specificity">
    <text>Expressed in areas of chondro-osteogenic transition and widely in the nervous system.</text>
</comment>
<comment type="similarity">
    <text evidence="5">Belongs to the ITM2 family.</text>
</comment>
<organism>
    <name type="scientific">Gallus gallus</name>
    <name type="common">Chicken</name>
    <dbReference type="NCBI Taxonomy" id="9031"/>
    <lineage>
        <taxon>Eukaryota</taxon>
        <taxon>Metazoa</taxon>
        <taxon>Chordata</taxon>
        <taxon>Craniata</taxon>
        <taxon>Vertebrata</taxon>
        <taxon>Euteleostomi</taxon>
        <taxon>Archelosauria</taxon>
        <taxon>Archosauria</taxon>
        <taxon>Dinosauria</taxon>
        <taxon>Saurischia</taxon>
        <taxon>Theropoda</taxon>
        <taxon>Coelurosauria</taxon>
        <taxon>Aves</taxon>
        <taxon>Neognathae</taxon>
        <taxon>Galloanserae</taxon>
        <taxon>Galliformes</taxon>
        <taxon>Phasianidae</taxon>
        <taxon>Phasianinae</taxon>
        <taxon>Gallus</taxon>
    </lineage>
</organism>
<keyword id="KW-1003">Cell membrane</keyword>
<keyword id="KW-1015">Disulfide bond</keyword>
<keyword id="KW-0967">Endosome</keyword>
<keyword id="KW-0325">Glycoprotein</keyword>
<keyword id="KW-0333">Golgi apparatus</keyword>
<keyword id="KW-0472">Membrane</keyword>
<keyword id="KW-1185">Reference proteome</keyword>
<keyword id="KW-0735">Signal-anchor</keyword>
<keyword id="KW-0812">Transmembrane</keyword>
<keyword id="KW-1133">Transmembrane helix</keyword>